<name>DXR_HELMI</name>
<proteinExistence type="inferred from homology"/>
<dbReference type="EC" id="1.1.1.267" evidence="1"/>
<dbReference type="EMBL" id="CP000930">
    <property type="protein sequence ID" value="ABZ84820.1"/>
    <property type="molecule type" value="Genomic_DNA"/>
</dbReference>
<dbReference type="RefSeq" id="WP_012283319.1">
    <property type="nucleotide sequence ID" value="NC_010337.2"/>
</dbReference>
<dbReference type="SMR" id="B0THN7"/>
<dbReference type="STRING" id="498761.HM1_2264"/>
<dbReference type="KEGG" id="hmo:HM1_2264"/>
<dbReference type="eggNOG" id="COG0743">
    <property type="taxonomic scope" value="Bacteria"/>
</dbReference>
<dbReference type="HOGENOM" id="CLU_035714_4_0_9"/>
<dbReference type="UniPathway" id="UPA00056">
    <property type="reaction ID" value="UER00092"/>
</dbReference>
<dbReference type="Proteomes" id="UP000008550">
    <property type="component" value="Chromosome"/>
</dbReference>
<dbReference type="GO" id="GO:0030604">
    <property type="term" value="F:1-deoxy-D-xylulose-5-phosphate reductoisomerase activity"/>
    <property type="evidence" value="ECO:0007669"/>
    <property type="project" value="UniProtKB-UniRule"/>
</dbReference>
<dbReference type="GO" id="GO:0030145">
    <property type="term" value="F:manganese ion binding"/>
    <property type="evidence" value="ECO:0007669"/>
    <property type="project" value="TreeGrafter"/>
</dbReference>
<dbReference type="GO" id="GO:0070402">
    <property type="term" value="F:NADPH binding"/>
    <property type="evidence" value="ECO:0007669"/>
    <property type="project" value="InterPro"/>
</dbReference>
<dbReference type="GO" id="GO:0051484">
    <property type="term" value="P:isopentenyl diphosphate biosynthetic process, methylerythritol 4-phosphate pathway involved in terpenoid biosynthetic process"/>
    <property type="evidence" value="ECO:0007669"/>
    <property type="project" value="TreeGrafter"/>
</dbReference>
<dbReference type="FunFam" id="3.40.50.720:FF:000045">
    <property type="entry name" value="1-deoxy-D-xylulose 5-phosphate reductoisomerase"/>
    <property type="match status" value="1"/>
</dbReference>
<dbReference type="Gene3D" id="1.10.1740.10">
    <property type="match status" value="1"/>
</dbReference>
<dbReference type="Gene3D" id="3.40.50.720">
    <property type="entry name" value="NAD(P)-binding Rossmann-like Domain"/>
    <property type="match status" value="1"/>
</dbReference>
<dbReference type="HAMAP" id="MF_00183">
    <property type="entry name" value="DXP_reductoisom"/>
    <property type="match status" value="1"/>
</dbReference>
<dbReference type="InterPro" id="IPR003821">
    <property type="entry name" value="DXP_reductoisomerase"/>
</dbReference>
<dbReference type="InterPro" id="IPR013644">
    <property type="entry name" value="DXP_reductoisomerase_C"/>
</dbReference>
<dbReference type="InterPro" id="IPR013512">
    <property type="entry name" value="DXP_reductoisomerase_N"/>
</dbReference>
<dbReference type="InterPro" id="IPR026877">
    <property type="entry name" value="DXPR_C"/>
</dbReference>
<dbReference type="InterPro" id="IPR036169">
    <property type="entry name" value="DXPR_C_sf"/>
</dbReference>
<dbReference type="InterPro" id="IPR036291">
    <property type="entry name" value="NAD(P)-bd_dom_sf"/>
</dbReference>
<dbReference type="NCBIfam" id="TIGR00243">
    <property type="entry name" value="Dxr"/>
    <property type="match status" value="1"/>
</dbReference>
<dbReference type="NCBIfam" id="NF009114">
    <property type="entry name" value="PRK12464.1"/>
    <property type="match status" value="1"/>
</dbReference>
<dbReference type="PANTHER" id="PTHR30525">
    <property type="entry name" value="1-DEOXY-D-XYLULOSE 5-PHOSPHATE REDUCTOISOMERASE"/>
    <property type="match status" value="1"/>
</dbReference>
<dbReference type="PANTHER" id="PTHR30525:SF0">
    <property type="entry name" value="1-DEOXY-D-XYLULOSE 5-PHOSPHATE REDUCTOISOMERASE, CHLOROPLASTIC"/>
    <property type="match status" value="1"/>
</dbReference>
<dbReference type="Pfam" id="PF08436">
    <property type="entry name" value="DXP_redisom_C"/>
    <property type="match status" value="1"/>
</dbReference>
<dbReference type="Pfam" id="PF02670">
    <property type="entry name" value="DXP_reductoisom"/>
    <property type="match status" value="1"/>
</dbReference>
<dbReference type="Pfam" id="PF13288">
    <property type="entry name" value="DXPR_C"/>
    <property type="match status" value="1"/>
</dbReference>
<dbReference type="PIRSF" id="PIRSF006205">
    <property type="entry name" value="Dxp_reductismrs"/>
    <property type="match status" value="1"/>
</dbReference>
<dbReference type="SUPFAM" id="SSF69055">
    <property type="entry name" value="1-deoxy-D-xylulose-5-phosphate reductoisomerase, C-terminal domain"/>
    <property type="match status" value="1"/>
</dbReference>
<dbReference type="SUPFAM" id="SSF55347">
    <property type="entry name" value="Glyceraldehyde-3-phosphate dehydrogenase-like, C-terminal domain"/>
    <property type="match status" value="1"/>
</dbReference>
<dbReference type="SUPFAM" id="SSF51735">
    <property type="entry name" value="NAD(P)-binding Rossmann-fold domains"/>
    <property type="match status" value="1"/>
</dbReference>
<sequence length="391" mass="42921">MIKRIAILGSTGSIGRQTLEVVDRSEGRLTVQALAAGSNWKELLAQIEIYRPRLAAMMETEAAERLAEALWERGLPIPVVTGEAGLAEAACLPEVDTVVTAVSGAIGLGPTMAAIEAGKEIALANKETLVAAGPLVMAAARRREVTILPVDSEHSAIFQCLQGQDRRLARLILTASGGPFRDKSLEALHQVTPEDALRHPNWRMGPKITIDSASLMNKGLEVIEARWLFDIDFDDIEVLIHPQSIVHSMVEFADGSILSQMGLPDMRLPIQYALTYPERWQTGWPRLDITKTAALTFRRPDLERFPSLELAITAGRTGGSLPAVMNAANEVAVHAFLDHRIGFMDIPRIVREAMEAHEWQKEPDLPAIRQADAWARRFATERVGEGREVSA</sequence>
<accession>B0THN7</accession>
<keyword id="KW-0414">Isoprene biosynthesis</keyword>
<keyword id="KW-0464">Manganese</keyword>
<keyword id="KW-0479">Metal-binding</keyword>
<keyword id="KW-0521">NADP</keyword>
<keyword id="KW-0560">Oxidoreductase</keyword>
<keyword id="KW-1185">Reference proteome</keyword>
<comment type="function">
    <text evidence="1">Catalyzes the NADPH-dependent rearrangement and reduction of 1-deoxy-D-xylulose-5-phosphate (DXP) to 2-C-methyl-D-erythritol 4-phosphate (MEP).</text>
</comment>
<comment type="catalytic activity">
    <reaction evidence="1">
        <text>2-C-methyl-D-erythritol 4-phosphate + NADP(+) = 1-deoxy-D-xylulose 5-phosphate + NADPH + H(+)</text>
        <dbReference type="Rhea" id="RHEA:13717"/>
        <dbReference type="ChEBI" id="CHEBI:15378"/>
        <dbReference type="ChEBI" id="CHEBI:57783"/>
        <dbReference type="ChEBI" id="CHEBI:57792"/>
        <dbReference type="ChEBI" id="CHEBI:58262"/>
        <dbReference type="ChEBI" id="CHEBI:58349"/>
        <dbReference type="EC" id="1.1.1.267"/>
    </reaction>
    <physiologicalReaction direction="right-to-left" evidence="1">
        <dbReference type="Rhea" id="RHEA:13719"/>
    </physiologicalReaction>
</comment>
<comment type="cofactor">
    <cofactor evidence="1">
        <name>Mg(2+)</name>
        <dbReference type="ChEBI" id="CHEBI:18420"/>
    </cofactor>
    <cofactor evidence="1">
        <name>Mn(2+)</name>
        <dbReference type="ChEBI" id="CHEBI:29035"/>
    </cofactor>
</comment>
<comment type="pathway">
    <text evidence="1">Isoprenoid biosynthesis; isopentenyl diphosphate biosynthesis via DXP pathway; isopentenyl diphosphate from 1-deoxy-D-xylulose 5-phosphate: step 1/6.</text>
</comment>
<comment type="similarity">
    <text evidence="1">Belongs to the DXR family.</text>
</comment>
<feature type="chain" id="PRO_1000098499" description="1-deoxy-D-xylulose 5-phosphate reductoisomerase">
    <location>
        <begin position="1"/>
        <end position="391"/>
    </location>
</feature>
<feature type="binding site" evidence="1">
    <location>
        <position position="11"/>
    </location>
    <ligand>
        <name>NADPH</name>
        <dbReference type="ChEBI" id="CHEBI:57783"/>
    </ligand>
</feature>
<feature type="binding site" evidence="1">
    <location>
        <position position="12"/>
    </location>
    <ligand>
        <name>NADPH</name>
        <dbReference type="ChEBI" id="CHEBI:57783"/>
    </ligand>
</feature>
<feature type="binding site" evidence="1">
    <location>
        <position position="13"/>
    </location>
    <ligand>
        <name>NADPH</name>
        <dbReference type="ChEBI" id="CHEBI:57783"/>
    </ligand>
</feature>
<feature type="binding site" evidence="1">
    <location>
        <position position="14"/>
    </location>
    <ligand>
        <name>NADPH</name>
        <dbReference type="ChEBI" id="CHEBI:57783"/>
    </ligand>
</feature>
<feature type="binding site" evidence="1">
    <location>
        <position position="37"/>
    </location>
    <ligand>
        <name>NADPH</name>
        <dbReference type="ChEBI" id="CHEBI:57783"/>
    </ligand>
</feature>
<feature type="binding site" evidence="1">
    <location>
        <position position="39"/>
    </location>
    <ligand>
        <name>NADPH</name>
        <dbReference type="ChEBI" id="CHEBI:57783"/>
    </ligand>
</feature>
<feature type="binding site" evidence="1">
    <location>
        <position position="125"/>
    </location>
    <ligand>
        <name>NADPH</name>
        <dbReference type="ChEBI" id="CHEBI:57783"/>
    </ligand>
</feature>
<feature type="binding site" evidence="1">
    <location>
        <position position="126"/>
    </location>
    <ligand>
        <name>1-deoxy-D-xylulose 5-phosphate</name>
        <dbReference type="ChEBI" id="CHEBI:57792"/>
    </ligand>
</feature>
<feature type="binding site" evidence="1">
    <location>
        <position position="127"/>
    </location>
    <ligand>
        <name>NADPH</name>
        <dbReference type="ChEBI" id="CHEBI:57783"/>
    </ligand>
</feature>
<feature type="binding site" evidence="1">
    <location>
        <position position="151"/>
    </location>
    <ligand>
        <name>Mn(2+)</name>
        <dbReference type="ChEBI" id="CHEBI:29035"/>
    </ligand>
</feature>
<feature type="binding site" evidence="1">
    <location>
        <position position="152"/>
    </location>
    <ligand>
        <name>1-deoxy-D-xylulose 5-phosphate</name>
        <dbReference type="ChEBI" id="CHEBI:57792"/>
    </ligand>
</feature>
<feature type="binding site" evidence="1">
    <location>
        <position position="153"/>
    </location>
    <ligand>
        <name>1-deoxy-D-xylulose 5-phosphate</name>
        <dbReference type="ChEBI" id="CHEBI:57792"/>
    </ligand>
</feature>
<feature type="binding site" evidence="1">
    <location>
        <position position="153"/>
    </location>
    <ligand>
        <name>Mn(2+)</name>
        <dbReference type="ChEBI" id="CHEBI:29035"/>
    </ligand>
</feature>
<feature type="binding site" evidence="1">
    <location>
        <position position="176"/>
    </location>
    <ligand>
        <name>1-deoxy-D-xylulose 5-phosphate</name>
        <dbReference type="ChEBI" id="CHEBI:57792"/>
    </ligand>
</feature>
<feature type="binding site" evidence="1">
    <location>
        <position position="199"/>
    </location>
    <ligand>
        <name>1-deoxy-D-xylulose 5-phosphate</name>
        <dbReference type="ChEBI" id="CHEBI:57792"/>
    </ligand>
</feature>
<feature type="binding site" evidence="1">
    <location>
        <position position="205"/>
    </location>
    <ligand>
        <name>NADPH</name>
        <dbReference type="ChEBI" id="CHEBI:57783"/>
    </ligand>
</feature>
<feature type="binding site" evidence="1">
    <location>
        <position position="212"/>
    </location>
    <ligand>
        <name>1-deoxy-D-xylulose 5-phosphate</name>
        <dbReference type="ChEBI" id="CHEBI:57792"/>
    </ligand>
</feature>
<feature type="binding site" evidence="1">
    <location>
        <position position="217"/>
    </location>
    <ligand>
        <name>1-deoxy-D-xylulose 5-phosphate</name>
        <dbReference type="ChEBI" id="CHEBI:57792"/>
    </ligand>
</feature>
<feature type="binding site" evidence="1">
    <location>
        <position position="218"/>
    </location>
    <ligand>
        <name>1-deoxy-D-xylulose 5-phosphate</name>
        <dbReference type="ChEBI" id="CHEBI:57792"/>
    </ligand>
</feature>
<feature type="binding site" evidence="1">
    <location>
        <position position="221"/>
    </location>
    <ligand>
        <name>1-deoxy-D-xylulose 5-phosphate</name>
        <dbReference type="ChEBI" id="CHEBI:57792"/>
    </ligand>
</feature>
<feature type="binding site" evidence="1">
    <location>
        <position position="221"/>
    </location>
    <ligand>
        <name>Mn(2+)</name>
        <dbReference type="ChEBI" id="CHEBI:29035"/>
    </ligand>
</feature>
<organism>
    <name type="scientific">Heliobacterium modesticaldum (strain ATCC 51547 / Ice1)</name>
    <dbReference type="NCBI Taxonomy" id="498761"/>
    <lineage>
        <taxon>Bacteria</taxon>
        <taxon>Bacillati</taxon>
        <taxon>Bacillota</taxon>
        <taxon>Clostridia</taxon>
        <taxon>Eubacteriales</taxon>
        <taxon>Heliobacteriaceae</taxon>
        <taxon>Heliomicrobium</taxon>
    </lineage>
</organism>
<evidence type="ECO:0000255" key="1">
    <source>
        <dbReference type="HAMAP-Rule" id="MF_00183"/>
    </source>
</evidence>
<gene>
    <name evidence="1" type="primary">dxr</name>
    <name type="ordered locus">Helmi_21950</name>
    <name type="ORF">HM1_2264</name>
</gene>
<protein>
    <recommendedName>
        <fullName evidence="1">1-deoxy-D-xylulose 5-phosphate reductoisomerase</fullName>
        <shortName evidence="1">DXP reductoisomerase</shortName>
        <ecNumber evidence="1">1.1.1.267</ecNumber>
    </recommendedName>
    <alternativeName>
        <fullName evidence="1">1-deoxyxylulose-5-phosphate reductoisomerase</fullName>
    </alternativeName>
    <alternativeName>
        <fullName evidence="1">2-C-methyl-D-erythritol 4-phosphate synthase</fullName>
    </alternativeName>
</protein>
<reference key="1">
    <citation type="journal article" date="2008" name="J. Bacteriol.">
        <title>The genome of Heliobacterium modesticaldum, a phototrophic representative of the Firmicutes containing the simplest photosynthetic apparatus.</title>
        <authorList>
            <person name="Sattley W.M."/>
            <person name="Madigan M.T."/>
            <person name="Swingley W.D."/>
            <person name="Cheung P.C."/>
            <person name="Clocksin K.M."/>
            <person name="Conrad A.L."/>
            <person name="Dejesa L.C."/>
            <person name="Honchak B.M."/>
            <person name="Jung D.O."/>
            <person name="Karbach L.E."/>
            <person name="Kurdoglu A."/>
            <person name="Lahiri S."/>
            <person name="Mastrian S.D."/>
            <person name="Page L.E."/>
            <person name="Taylor H.L."/>
            <person name="Wang Z.T."/>
            <person name="Raymond J."/>
            <person name="Chen M."/>
            <person name="Blankenship R.E."/>
            <person name="Touchman J.W."/>
        </authorList>
    </citation>
    <scope>NUCLEOTIDE SEQUENCE [LARGE SCALE GENOMIC DNA]</scope>
    <source>
        <strain>ATCC 51547 / Ice1</strain>
    </source>
</reference>